<protein>
    <recommendedName>
        <fullName>Dysfunctional anti-sigma-K factor RskA</fullName>
    </recommendedName>
    <alternativeName>
        <fullName>Regulator of SigK</fullName>
    </alternativeName>
    <alternativeName>
        <fullName>Sigma-K anti-sigma factor RskA</fullName>
    </alternativeName>
</protein>
<dbReference type="EMBL" id="LT708304">
    <property type="protein sequence ID" value="SIT99040.1"/>
    <property type="molecule type" value="Genomic_DNA"/>
</dbReference>
<dbReference type="RefSeq" id="NP_854115.1">
    <property type="nucleotide sequence ID" value="NC_002945.3"/>
</dbReference>
<dbReference type="RefSeq" id="WP_010950404.1">
    <property type="nucleotide sequence ID" value="NC_002945.4"/>
</dbReference>
<dbReference type="SMR" id="Q7U1Z7"/>
<dbReference type="PATRIC" id="fig|233413.5.peg.492"/>
<dbReference type="Proteomes" id="UP000001419">
    <property type="component" value="Chromosome"/>
</dbReference>
<dbReference type="GO" id="GO:0005886">
    <property type="term" value="C:plasma membrane"/>
    <property type="evidence" value="ECO:0007669"/>
    <property type="project" value="UniProtKB-SubCell"/>
</dbReference>
<dbReference type="GO" id="GO:0016989">
    <property type="term" value="F:sigma factor antagonist activity"/>
    <property type="evidence" value="ECO:0007669"/>
    <property type="project" value="TreeGrafter"/>
</dbReference>
<dbReference type="GO" id="GO:0006417">
    <property type="term" value="P:regulation of translation"/>
    <property type="evidence" value="ECO:0007669"/>
    <property type="project" value="TreeGrafter"/>
</dbReference>
<dbReference type="Gene3D" id="1.10.10.1320">
    <property type="entry name" value="Anti-sigma factor, zinc-finger domain"/>
    <property type="match status" value="1"/>
</dbReference>
<dbReference type="InterPro" id="IPR051474">
    <property type="entry name" value="Anti-sigma-K/W_factor"/>
</dbReference>
<dbReference type="InterPro" id="IPR041916">
    <property type="entry name" value="Anti_sigma_zinc_sf"/>
</dbReference>
<dbReference type="InterPro" id="IPR018764">
    <property type="entry name" value="RskA_C"/>
</dbReference>
<dbReference type="InterPro" id="IPR053877">
    <property type="entry name" value="RskA_N"/>
</dbReference>
<dbReference type="PANTHER" id="PTHR37461">
    <property type="entry name" value="ANTI-SIGMA-K FACTOR RSKA"/>
    <property type="match status" value="1"/>
</dbReference>
<dbReference type="PANTHER" id="PTHR37461:SF1">
    <property type="entry name" value="ANTI-SIGMA-K FACTOR RSKA"/>
    <property type="match status" value="1"/>
</dbReference>
<dbReference type="Pfam" id="PF10099">
    <property type="entry name" value="RskA_C"/>
    <property type="match status" value="1"/>
</dbReference>
<dbReference type="Pfam" id="PF22618">
    <property type="entry name" value="RskA_N"/>
    <property type="match status" value="1"/>
</dbReference>
<reference key="1">
    <citation type="journal article" date="2003" name="Proc. Natl. Acad. Sci. U.S.A.">
        <title>The complete genome sequence of Mycobacterium bovis.</title>
        <authorList>
            <person name="Garnier T."/>
            <person name="Eiglmeier K."/>
            <person name="Camus J.-C."/>
            <person name="Medina N."/>
            <person name="Mansoor H."/>
            <person name="Pryor M."/>
            <person name="Duthoy S."/>
            <person name="Grondin S."/>
            <person name="Lacroix C."/>
            <person name="Monsempe C."/>
            <person name="Simon S."/>
            <person name="Harris B."/>
            <person name="Atkin R."/>
            <person name="Doggett J."/>
            <person name="Mayes R."/>
            <person name="Keating L."/>
            <person name="Wheeler P.R."/>
            <person name="Parkhill J."/>
            <person name="Barrell B.G."/>
            <person name="Cole S.T."/>
            <person name="Gordon S.V."/>
            <person name="Hewinson R.G."/>
        </authorList>
    </citation>
    <scope>NUCLEOTIDE SEQUENCE [LARGE SCALE GENOMIC DNA]</scope>
    <source>
        <strain>ATCC BAA-935 / AF2122/97</strain>
    </source>
</reference>
<reference key="2">
    <citation type="journal article" date="2017" name="Genome Announc.">
        <title>Updated reference genome sequence and annotation of Mycobacterium bovis AF2122/97.</title>
        <authorList>
            <person name="Malone K.M."/>
            <person name="Farrell D."/>
            <person name="Stuber T.P."/>
            <person name="Schubert O.T."/>
            <person name="Aebersold R."/>
            <person name="Robbe-Austerman S."/>
            <person name="Gordon S.V."/>
        </authorList>
    </citation>
    <scope>NUCLEOTIDE SEQUENCE [LARGE SCALE GENOMIC DNA]</scope>
    <scope>GENOME REANNOTATION</scope>
    <source>
        <strain>ATCC BAA-935 / AF2122/97</strain>
    </source>
</reference>
<reference key="3">
    <citation type="journal article" date="2006" name="Mol. Microbiol.">
        <title>Mutations in Mycobacterium tuberculosis Rv0444c, the gene encoding anti-sigK, explain high level expression of MPB70 and MPB83 in Mycobacterium bovis.</title>
        <authorList>
            <person name="Said-Salim B."/>
            <person name="Mostowy S."/>
            <person name="Kristof A.S."/>
            <person name="Behr M.A."/>
        </authorList>
    </citation>
    <scope>LACK OF FUNCTION AS AN ANTI-SIGMA-K FACTOR</scope>
    <source>
        <strain>62389</strain>
    </source>
</reference>
<name>RSKA_MYCBO</name>
<proteinExistence type="evidence at protein level"/>
<sequence length="232" mass="24013">MTEHTDFELLELATPYALNAVSDDERADIDRRVAAAPSPVAAAFNDEVRAVRETMAVVSAATTAEPPAHLRTAILDATKPEVRRQSRWRTAAFASAAAIAVGLGAFDLGVLTRPSPPPTVAEQVLTAPDVRTVSRPLGAGTATVVFSRDRNTGLLVMNNVAPPSRGTVYQMWLLGGAKGPRSAETMGTAAVTPSTTATLTDLGASTALAFTVEPGTGSPQPTGTILAELPLG</sequence>
<accession>Q7U1Z7</accession>
<accession>A0A1R3XVD0</accession>
<accession>X2BF17</accession>
<gene>
    <name type="primary">rskA</name>
    <name type="ordered locus">BQ2027_MB0452C</name>
</gene>
<feature type="chain" id="PRO_0000313830" description="Dysfunctional anti-sigma-K factor RskA">
    <location>
        <begin position="1"/>
        <end position="232"/>
    </location>
</feature>
<feature type="topological domain" description="Cytoplasmic" evidence="2">
    <location>
        <begin position="1"/>
        <end position="90"/>
    </location>
</feature>
<feature type="transmembrane region" description="Helical" evidence="2">
    <location>
        <begin position="91"/>
        <end position="111"/>
    </location>
</feature>
<feature type="topological domain" description="Extracellular" evidence="2">
    <location>
        <begin position="112"/>
        <end position="232"/>
    </location>
</feature>
<evidence type="ECO:0000250" key="1"/>
<evidence type="ECO:0000255" key="2"/>
<evidence type="ECO:0000305" key="3"/>
<organism>
    <name type="scientific">Mycobacterium bovis (strain ATCC BAA-935 / AF2122/97)</name>
    <dbReference type="NCBI Taxonomy" id="233413"/>
    <lineage>
        <taxon>Bacteria</taxon>
        <taxon>Bacillati</taxon>
        <taxon>Actinomycetota</taxon>
        <taxon>Actinomycetes</taxon>
        <taxon>Mycobacteriales</taxon>
        <taxon>Mycobacteriaceae</taxon>
        <taxon>Mycobacterium</taxon>
        <taxon>Mycobacterium tuberculosis complex</taxon>
    </lineage>
</organism>
<comment type="function">
    <text>An anti-sigma factor for extracytoplasmic function (ECF) sigma factor SigK. ECF sigma factors are held in an inactive form by an anti-sigma factor until released by regulated intramembrane proteolysis (RIP). However, in M.bovis this protein is probably dysfunctional, due to at least 1 of the 2 naturally occurring polymorphisms in its gene, when compared to M.tuberculosis. This leads to an increased expression of SigK-regulated genes, such as mpb70 and mpb83. RIP occurs when an extracytoplasmic signal triggers a concerted proteolytic cascade to transmit information and elicit cellular responses. The membrane-spanning regulatory substrate protein is first cut extracytoplasmically (site-1 protease, S1P), then within the membrane itself (site-2 protease, S2P, Rip1), while cytoplasmic proteases finish degrading the regulatory protein, liberating the sigma factor.</text>
</comment>
<comment type="subcellular location">
    <subcellularLocation>
        <location evidence="3">Cell membrane</location>
        <topology evidence="3">Single-pass membrane protein</topology>
    </subcellularLocation>
</comment>
<comment type="domain">
    <text evidence="1">The cytosolic domain interacts with sigma factor SigK.</text>
</comment>
<comment type="similarity">
    <text evidence="3">Belongs to the anti-sigma-K factor family.</text>
</comment>
<keyword id="KW-1003">Cell membrane</keyword>
<keyword id="KW-0472">Membrane</keyword>
<keyword id="KW-1185">Reference proteome</keyword>
<keyword id="KW-0804">Transcription</keyword>
<keyword id="KW-0805">Transcription regulation</keyword>
<keyword id="KW-0812">Transmembrane</keyword>
<keyword id="KW-1133">Transmembrane helix</keyword>